<reference key="1">
    <citation type="journal article" date="2008" name="J. Bacteriol.">
        <title>Genome sequence of the streptomycin-producing microorganism Streptomyces griseus IFO 13350.</title>
        <authorList>
            <person name="Ohnishi Y."/>
            <person name="Ishikawa J."/>
            <person name="Hara H."/>
            <person name="Suzuki H."/>
            <person name="Ikenoya M."/>
            <person name="Ikeda H."/>
            <person name="Yamashita A."/>
            <person name="Hattori M."/>
            <person name="Horinouchi S."/>
        </authorList>
    </citation>
    <scope>NUCLEOTIDE SEQUENCE [LARGE SCALE GENOMIC DNA]</scope>
    <source>
        <strain>JCM 4626 / CBS 651.72 / NBRC 13350 / KCC S-0626 / ISP 5235</strain>
    </source>
</reference>
<gene>
    <name evidence="1" type="primary">leuB</name>
    <name type="ordered locus">SGR_1983</name>
</gene>
<proteinExistence type="inferred from homology"/>
<evidence type="ECO:0000255" key="1">
    <source>
        <dbReference type="HAMAP-Rule" id="MF_01035"/>
    </source>
</evidence>
<feature type="chain" id="PRO_1000135858" description="3-isopropylmalate dehydrogenase">
    <location>
        <begin position="1"/>
        <end position="347"/>
    </location>
</feature>
<feature type="binding site" evidence="1">
    <location>
        <position position="94"/>
    </location>
    <ligand>
        <name>substrate</name>
    </ligand>
</feature>
<feature type="binding site" evidence="1">
    <location>
        <position position="104"/>
    </location>
    <ligand>
        <name>substrate</name>
    </ligand>
</feature>
<feature type="binding site" evidence="1">
    <location>
        <position position="128"/>
    </location>
    <ligand>
        <name>substrate</name>
    </ligand>
</feature>
<feature type="binding site" evidence="1">
    <location>
        <position position="219"/>
    </location>
    <ligand>
        <name>Mg(2+)</name>
        <dbReference type="ChEBI" id="CHEBI:18420"/>
    </ligand>
</feature>
<feature type="binding site" evidence="1">
    <location>
        <position position="219"/>
    </location>
    <ligand>
        <name>substrate</name>
    </ligand>
</feature>
<feature type="binding site" evidence="1">
    <location>
        <position position="243"/>
    </location>
    <ligand>
        <name>Mg(2+)</name>
        <dbReference type="ChEBI" id="CHEBI:18420"/>
    </ligand>
</feature>
<feature type="binding site" evidence="1">
    <location>
        <position position="247"/>
    </location>
    <ligand>
        <name>Mg(2+)</name>
        <dbReference type="ChEBI" id="CHEBI:18420"/>
    </ligand>
</feature>
<feature type="binding site" evidence="1">
    <location>
        <begin position="279"/>
        <end position="291"/>
    </location>
    <ligand>
        <name>NAD(+)</name>
        <dbReference type="ChEBI" id="CHEBI:57540"/>
    </ligand>
</feature>
<feature type="site" description="Important for catalysis" evidence="1">
    <location>
        <position position="135"/>
    </location>
</feature>
<feature type="site" description="Important for catalysis" evidence="1">
    <location>
        <position position="186"/>
    </location>
</feature>
<protein>
    <recommendedName>
        <fullName evidence="1">3-isopropylmalate dehydrogenase</fullName>
        <ecNumber evidence="1">1.1.1.85</ecNumber>
    </recommendedName>
    <alternativeName>
        <fullName evidence="1">3-IPM-DH</fullName>
    </alternativeName>
    <alternativeName>
        <fullName evidence="1">Beta-IPM dehydrogenase</fullName>
        <shortName evidence="1">IMDH</shortName>
    </alternativeName>
</protein>
<organism>
    <name type="scientific">Streptomyces griseus subsp. griseus (strain JCM 4626 / CBS 651.72 / NBRC 13350 / KCC S-0626 / ISP 5235)</name>
    <dbReference type="NCBI Taxonomy" id="455632"/>
    <lineage>
        <taxon>Bacteria</taxon>
        <taxon>Bacillati</taxon>
        <taxon>Actinomycetota</taxon>
        <taxon>Actinomycetes</taxon>
        <taxon>Kitasatosporales</taxon>
        <taxon>Streptomycetaceae</taxon>
        <taxon>Streptomyces</taxon>
    </lineage>
</organism>
<name>LEU3_STRGG</name>
<dbReference type="EC" id="1.1.1.85" evidence="1"/>
<dbReference type="EMBL" id="AP009493">
    <property type="protein sequence ID" value="BAG18812.1"/>
    <property type="molecule type" value="Genomic_DNA"/>
</dbReference>
<dbReference type="RefSeq" id="WP_012378902.1">
    <property type="nucleotide sequence ID" value="NC_010572.1"/>
</dbReference>
<dbReference type="SMR" id="B1VZ57"/>
<dbReference type="KEGG" id="sgr:SGR_1983"/>
<dbReference type="PATRIC" id="fig|455632.4.peg.2013"/>
<dbReference type="eggNOG" id="COG0473">
    <property type="taxonomic scope" value="Bacteria"/>
</dbReference>
<dbReference type="HOGENOM" id="CLU_031953_0_1_11"/>
<dbReference type="UniPathway" id="UPA00048">
    <property type="reaction ID" value="UER00072"/>
</dbReference>
<dbReference type="Proteomes" id="UP000001685">
    <property type="component" value="Chromosome"/>
</dbReference>
<dbReference type="GO" id="GO:0005737">
    <property type="term" value="C:cytoplasm"/>
    <property type="evidence" value="ECO:0007669"/>
    <property type="project" value="UniProtKB-SubCell"/>
</dbReference>
<dbReference type="GO" id="GO:0003862">
    <property type="term" value="F:3-isopropylmalate dehydrogenase activity"/>
    <property type="evidence" value="ECO:0007669"/>
    <property type="project" value="UniProtKB-UniRule"/>
</dbReference>
<dbReference type="GO" id="GO:0000287">
    <property type="term" value="F:magnesium ion binding"/>
    <property type="evidence" value="ECO:0007669"/>
    <property type="project" value="InterPro"/>
</dbReference>
<dbReference type="GO" id="GO:0051287">
    <property type="term" value="F:NAD binding"/>
    <property type="evidence" value="ECO:0007669"/>
    <property type="project" value="InterPro"/>
</dbReference>
<dbReference type="GO" id="GO:0009098">
    <property type="term" value="P:L-leucine biosynthetic process"/>
    <property type="evidence" value="ECO:0007669"/>
    <property type="project" value="UniProtKB-UniRule"/>
</dbReference>
<dbReference type="Gene3D" id="3.40.718.10">
    <property type="entry name" value="Isopropylmalate Dehydrogenase"/>
    <property type="match status" value="1"/>
</dbReference>
<dbReference type="HAMAP" id="MF_01035">
    <property type="entry name" value="LeuB_type2"/>
    <property type="match status" value="1"/>
</dbReference>
<dbReference type="InterPro" id="IPR050501">
    <property type="entry name" value="ICDH/IPMDH"/>
</dbReference>
<dbReference type="InterPro" id="IPR019818">
    <property type="entry name" value="IsoCit/isopropylmalate_DH_CS"/>
</dbReference>
<dbReference type="InterPro" id="IPR024084">
    <property type="entry name" value="IsoPropMal-DH-like_dom"/>
</dbReference>
<dbReference type="InterPro" id="IPR023698">
    <property type="entry name" value="LeuB_actb"/>
</dbReference>
<dbReference type="NCBIfam" id="NF002898">
    <property type="entry name" value="PRK03437.1"/>
    <property type="match status" value="1"/>
</dbReference>
<dbReference type="PANTHER" id="PTHR43275">
    <property type="entry name" value="D-MALATE DEHYDROGENASE [DECARBOXYLATING]"/>
    <property type="match status" value="1"/>
</dbReference>
<dbReference type="PANTHER" id="PTHR43275:SF1">
    <property type="entry name" value="D-MALATE DEHYDROGENASE [DECARBOXYLATING]"/>
    <property type="match status" value="1"/>
</dbReference>
<dbReference type="Pfam" id="PF00180">
    <property type="entry name" value="Iso_dh"/>
    <property type="match status" value="1"/>
</dbReference>
<dbReference type="SMART" id="SM01329">
    <property type="entry name" value="Iso_dh"/>
    <property type="match status" value="1"/>
</dbReference>
<dbReference type="SUPFAM" id="SSF53659">
    <property type="entry name" value="Isocitrate/Isopropylmalate dehydrogenase-like"/>
    <property type="match status" value="1"/>
</dbReference>
<dbReference type="PROSITE" id="PS00470">
    <property type="entry name" value="IDH_IMDH"/>
    <property type="match status" value="1"/>
</dbReference>
<keyword id="KW-0028">Amino-acid biosynthesis</keyword>
<keyword id="KW-0100">Branched-chain amino acid biosynthesis</keyword>
<keyword id="KW-0963">Cytoplasm</keyword>
<keyword id="KW-0432">Leucine biosynthesis</keyword>
<keyword id="KW-0460">Magnesium</keyword>
<keyword id="KW-0464">Manganese</keyword>
<keyword id="KW-0479">Metal-binding</keyword>
<keyword id="KW-0520">NAD</keyword>
<keyword id="KW-0560">Oxidoreductase</keyword>
<comment type="function">
    <text evidence="1">Catalyzes the oxidation of 3-carboxy-2-hydroxy-4-methylpentanoate (3-isopropylmalate) to 3-carboxy-4-methyl-2-oxopentanoate. The product decarboxylates to 4-methyl-2 oxopentanoate.</text>
</comment>
<comment type="catalytic activity">
    <reaction evidence="1">
        <text>(2R,3S)-3-isopropylmalate + NAD(+) = 4-methyl-2-oxopentanoate + CO2 + NADH</text>
        <dbReference type="Rhea" id="RHEA:32271"/>
        <dbReference type="ChEBI" id="CHEBI:16526"/>
        <dbReference type="ChEBI" id="CHEBI:17865"/>
        <dbReference type="ChEBI" id="CHEBI:35121"/>
        <dbReference type="ChEBI" id="CHEBI:57540"/>
        <dbReference type="ChEBI" id="CHEBI:57945"/>
        <dbReference type="EC" id="1.1.1.85"/>
    </reaction>
</comment>
<comment type="cofactor">
    <cofactor evidence="1">
        <name>Mg(2+)</name>
        <dbReference type="ChEBI" id="CHEBI:18420"/>
    </cofactor>
    <cofactor evidence="1">
        <name>Mn(2+)</name>
        <dbReference type="ChEBI" id="CHEBI:29035"/>
    </cofactor>
    <text evidence="1">Binds 1 Mg(2+) or Mn(2+) ion per subunit.</text>
</comment>
<comment type="pathway">
    <text evidence="1">Amino-acid biosynthesis; L-leucine biosynthesis; L-leucine from 3-methyl-2-oxobutanoate: step 3/4.</text>
</comment>
<comment type="subunit">
    <text evidence="1">Homodimer.</text>
</comment>
<comment type="subcellular location">
    <subcellularLocation>
        <location evidence="1">Cytoplasm</location>
    </subcellularLocation>
</comment>
<comment type="similarity">
    <text evidence="1">Belongs to the isocitrate and isopropylmalate dehydrogenases family. LeuB type 2 subfamily.</text>
</comment>
<sequence length="347" mass="36867">MSRSIDLAVIPGDGIGQEVVAQGLKVLNAVLPQDVKLETKEYDLGAQRWHRTGDTLPDAELEALKGHDAILLGAIGDPSVPSGVLERGLLLKLRFAFDHFINLRPSKLFPNTATPLAGRPDIDFVVVREGTEGPYTGNGGSLRTGTPAEVATEVSLNTAYGVERVVRDAFERAAARPRKKLTLVHKNNVLVYAGHLWKNTFDKVAAEYPQVSTDYLHVDAATIFFVTQPERFDVIVTDNLFGDILTDLAAAVSGGIGLAASGNINPTGAFPSMFEPVHGSAPDIAGQGKADPTATVLSVALLLRHLGYEAEAARIEDAVSADLAERDGSVARTTDEIGDALAVRVAS</sequence>
<accession>B1VZ57</accession>